<comment type="function">
    <text evidence="1">Catalyzes the transfer of an acyl group from acyl-phosphate (acyl-PO(4)) to glycerol-3-phosphate (G3P) to form lysophosphatidic acid (LPA). This enzyme utilizes acyl-phosphate as fatty acyl donor, but not acyl-CoA or acyl-ACP.</text>
</comment>
<comment type="catalytic activity">
    <reaction evidence="1">
        <text>an acyl phosphate + sn-glycerol 3-phosphate = a 1-acyl-sn-glycero-3-phosphate + phosphate</text>
        <dbReference type="Rhea" id="RHEA:34075"/>
        <dbReference type="ChEBI" id="CHEBI:43474"/>
        <dbReference type="ChEBI" id="CHEBI:57597"/>
        <dbReference type="ChEBI" id="CHEBI:57970"/>
        <dbReference type="ChEBI" id="CHEBI:59918"/>
        <dbReference type="EC" id="2.3.1.275"/>
    </reaction>
</comment>
<comment type="pathway">
    <text evidence="1">Lipid metabolism; phospholipid metabolism.</text>
</comment>
<comment type="subunit">
    <text evidence="1">Probably interacts with PlsX.</text>
</comment>
<comment type="subcellular location">
    <subcellularLocation>
        <location evidence="1">Cell membrane</location>
        <topology evidence="1">Multi-pass membrane protein</topology>
    </subcellularLocation>
</comment>
<comment type="similarity">
    <text evidence="1">Belongs to the PlsY family.</text>
</comment>
<proteinExistence type="inferred from homology"/>
<accession>B0K3E3</accession>
<protein>
    <recommendedName>
        <fullName evidence="1">Glycerol-3-phosphate acyltransferase</fullName>
    </recommendedName>
    <alternativeName>
        <fullName evidence="1">Acyl-PO4 G3P acyltransferase</fullName>
    </alternativeName>
    <alternativeName>
        <fullName evidence="1">Acyl-phosphate--glycerol-3-phosphate acyltransferase</fullName>
    </alternativeName>
    <alternativeName>
        <fullName evidence="1">G3P acyltransferase</fullName>
        <shortName evidence="1">GPAT</shortName>
        <ecNumber evidence="1">2.3.1.275</ecNumber>
    </alternativeName>
    <alternativeName>
        <fullName evidence="1">Lysophosphatidic acid synthase</fullName>
        <shortName evidence="1">LPA synthase</shortName>
    </alternativeName>
</protein>
<name>PLSY_THEPX</name>
<dbReference type="EC" id="2.3.1.275" evidence="1"/>
<dbReference type="EMBL" id="CP000923">
    <property type="protein sequence ID" value="ABY93254.1"/>
    <property type="molecule type" value="Genomic_DNA"/>
</dbReference>
<dbReference type="RefSeq" id="WP_009052531.1">
    <property type="nucleotide sequence ID" value="NC_010320.1"/>
</dbReference>
<dbReference type="SMR" id="B0K3E3"/>
<dbReference type="KEGG" id="tex:Teth514_1982"/>
<dbReference type="HOGENOM" id="CLU_081254_7_1_9"/>
<dbReference type="UniPathway" id="UPA00085"/>
<dbReference type="Proteomes" id="UP000002155">
    <property type="component" value="Chromosome"/>
</dbReference>
<dbReference type="GO" id="GO:0005886">
    <property type="term" value="C:plasma membrane"/>
    <property type="evidence" value="ECO:0007669"/>
    <property type="project" value="UniProtKB-SubCell"/>
</dbReference>
<dbReference type="GO" id="GO:0043772">
    <property type="term" value="F:acyl-phosphate glycerol-3-phosphate acyltransferase activity"/>
    <property type="evidence" value="ECO:0007669"/>
    <property type="project" value="UniProtKB-UniRule"/>
</dbReference>
<dbReference type="GO" id="GO:0008654">
    <property type="term" value="P:phospholipid biosynthetic process"/>
    <property type="evidence" value="ECO:0007669"/>
    <property type="project" value="UniProtKB-UniRule"/>
</dbReference>
<dbReference type="HAMAP" id="MF_01043">
    <property type="entry name" value="PlsY"/>
    <property type="match status" value="1"/>
</dbReference>
<dbReference type="InterPro" id="IPR003811">
    <property type="entry name" value="G3P_acylTferase_PlsY"/>
</dbReference>
<dbReference type="NCBIfam" id="TIGR00023">
    <property type="entry name" value="glycerol-3-phosphate 1-O-acyltransferase PlsY"/>
    <property type="match status" value="1"/>
</dbReference>
<dbReference type="PANTHER" id="PTHR30309:SF0">
    <property type="entry name" value="GLYCEROL-3-PHOSPHATE ACYLTRANSFERASE-RELATED"/>
    <property type="match status" value="1"/>
</dbReference>
<dbReference type="PANTHER" id="PTHR30309">
    <property type="entry name" value="INNER MEMBRANE PROTEIN YGIH"/>
    <property type="match status" value="1"/>
</dbReference>
<dbReference type="Pfam" id="PF02660">
    <property type="entry name" value="G3P_acyltransf"/>
    <property type="match status" value="1"/>
</dbReference>
<dbReference type="SMART" id="SM01207">
    <property type="entry name" value="G3P_acyltransf"/>
    <property type="match status" value="1"/>
</dbReference>
<feature type="chain" id="PRO_1000136130" description="Glycerol-3-phosphate acyltransferase">
    <location>
        <begin position="1"/>
        <end position="198"/>
    </location>
</feature>
<feature type="transmembrane region" description="Helical" evidence="1">
    <location>
        <begin position="2"/>
        <end position="22"/>
    </location>
</feature>
<feature type="transmembrane region" description="Helical" evidence="1">
    <location>
        <begin position="48"/>
        <end position="70"/>
    </location>
</feature>
<feature type="transmembrane region" description="Helical" evidence="1">
    <location>
        <begin position="75"/>
        <end position="97"/>
    </location>
</feature>
<feature type="transmembrane region" description="Helical" evidence="1">
    <location>
        <begin position="111"/>
        <end position="131"/>
    </location>
</feature>
<feature type="transmembrane region" description="Helical" evidence="1">
    <location>
        <begin position="154"/>
        <end position="174"/>
    </location>
</feature>
<reference key="1">
    <citation type="submission" date="2008-01" db="EMBL/GenBank/DDBJ databases">
        <title>Complete sequence of Thermoanaerobacter sp. X514.</title>
        <authorList>
            <consortium name="US DOE Joint Genome Institute"/>
            <person name="Copeland A."/>
            <person name="Lucas S."/>
            <person name="Lapidus A."/>
            <person name="Barry K."/>
            <person name="Glavina del Rio T."/>
            <person name="Dalin E."/>
            <person name="Tice H."/>
            <person name="Pitluck S."/>
            <person name="Bruce D."/>
            <person name="Goodwin L."/>
            <person name="Saunders E."/>
            <person name="Brettin T."/>
            <person name="Detter J.C."/>
            <person name="Han C."/>
            <person name="Schmutz J."/>
            <person name="Larimer F."/>
            <person name="Land M."/>
            <person name="Hauser L."/>
            <person name="Kyrpides N."/>
            <person name="Kim E."/>
            <person name="Hemme C."/>
            <person name="Fields M.W."/>
            <person name="He Z."/>
            <person name="Zhou J."/>
            <person name="Richardson P."/>
        </authorList>
    </citation>
    <scope>NUCLEOTIDE SEQUENCE [LARGE SCALE GENOMIC DNA]</scope>
    <source>
        <strain>X514</strain>
    </source>
</reference>
<evidence type="ECO:0000255" key="1">
    <source>
        <dbReference type="HAMAP-Rule" id="MF_01043"/>
    </source>
</evidence>
<sequence length="198" mass="21044">MYAVLTAIIAYLIGCINNAYIFTKYTRNIDIRNYGSGNAGATNVLRVLGYKAAAPVFALDVLKGVIAVLIGKYLMGNTGAMIAGIAVVCGHNWPVFLKFRGGKGIATSVGVVMTVSPLLGLIALAIGVTVIVLTKYVSLGSITGSVTFVLLNAIFWNSTQIFIFSLILASLAIFQHRSNIKRLLAGTESKLGQKTEIK</sequence>
<organism>
    <name type="scientific">Thermoanaerobacter sp. (strain X514)</name>
    <dbReference type="NCBI Taxonomy" id="399726"/>
    <lineage>
        <taxon>Bacteria</taxon>
        <taxon>Bacillati</taxon>
        <taxon>Bacillota</taxon>
        <taxon>Clostridia</taxon>
        <taxon>Thermoanaerobacterales</taxon>
        <taxon>Thermoanaerobacteraceae</taxon>
        <taxon>Thermoanaerobacter</taxon>
    </lineage>
</organism>
<keyword id="KW-1003">Cell membrane</keyword>
<keyword id="KW-0444">Lipid biosynthesis</keyword>
<keyword id="KW-0443">Lipid metabolism</keyword>
<keyword id="KW-0472">Membrane</keyword>
<keyword id="KW-0594">Phospholipid biosynthesis</keyword>
<keyword id="KW-1208">Phospholipid metabolism</keyword>
<keyword id="KW-0808">Transferase</keyword>
<keyword id="KW-0812">Transmembrane</keyword>
<keyword id="KW-1133">Transmembrane helix</keyword>
<gene>
    <name evidence="1" type="primary">plsY</name>
    <name type="ordered locus">Teth514_1982</name>
</gene>